<protein>
    <recommendedName>
        <fullName evidence="1">ATP synthase gamma chain</fullName>
    </recommendedName>
    <alternativeName>
        <fullName evidence="1">ATP synthase F1 sector gamma subunit</fullName>
    </alternativeName>
    <alternativeName>
        <fullName evidence="1">F-ATPase gamma subunit</fullName>
    </alternativeName>
</protein>
<proteinExistence type="inferred from homology"/>
<comment type="function">
    <text evidence="1">Produces ATP from ADP in the presence of a proton gradient across the membrane. The gamma chain is believed to be important in regulating ATPase activity and the flow of protons through the CF(0) complex.</text>
</comment>
<comment type="subunit">
    <text evidence="1">F-type ATPases have 2 components, CF(1) - the catalytic core - and CF(0) - the membrane proton channel. CF(1) has five subunits: alpha(3), beta(3), gamma(1), delta(1), epsilon(1). CF(0) has three main subunits: a, b and c.</text>
</comment>
<comment type="subcellular location">
    <subcellularLocation>
        <location evidence="1">Cell inner membrane</location>
        <topology evidence="1">Peripheral membrane protein</topology>
    </subcellularLocation>
</comment>
<comment type="similarity">
    <text evidence="1">Belongs to the ATPase gamma chain family.</text>
</comment>
<accession>B5QUS5</accession>
<name>ATPG_SALEP</name>
<dbReference type="EMBL" id="AM933172">
    <property type="protein sequence ID" value="CAR35256.1"/>
    <property type="molecule type" value="Genomic_DNA"/>
</dbReference>
<dbReference type="RefSeq" id="WP_000896506.1">
    <property type="nucleotide sequence ID" value="NC_011294.1"/>
</dbReference>
<dbReference type="SMR" id="B5QUS5"/>
<dbReference type="GeneID" id="66758155"/>
<dbReference type="KEGG" id="set:SEN3680"/>
<dbReference type="HOGENOM" id="CLU_050669_0_1_6"/>
<dbReference type="Proteomes" id="UP000000613">
    <property type="component" value="Chromosome"/>
</dbReference>
<dbReference type="GO" id="GO:0005886">
    <property type="term" value="C:plasma membrane"/>
    <property type="evidence" value="ECO:0007669"/>
    <property type="project" value="UniProtKB-SubCell"/>
</dbReference>
<dbReference type="GO" id="GO:0045259">
    <property type="term" value="C:proton-transporting ATP synthase complex"/>
    <property type="evidence" value="ECO:0007669"/>
    <property type="project" value="UniProtKB-KW"/>
</dbReference>
<dbReference type="GO" id="GO:0005524">
    <property type="term" value="F:ATP binding"/>
    <property type="evidence" value="ECO:0007669"/>
    <property type="project" value="UniProtKB-UniRule"/>
</dbReference>
<dbReference type="GO" id="GO:0046933">
    <property type="term" value="F:proton-transporting ATP synthase activity, rotational mechanism"/>
    <property type="evidence" value="ECO:0007669"/>
    <property type="project" value="UniProtKB-UniRule"/>
</dbReference>
<dbReference type="GO" id="GO:0042777">
    <property type="term" value="P:proton motive force-driven plasma membrane ATP synthesis"/>
    <property type="evidence" value="ECO:0007669"/>
    <property type="project" value="UniProtKB-UniRule"/>
</dbReference>
<dbReference type="CDD" id="cd12151">
    <property type="entry name" value="F1-ATPase_gamma"/>
    <property type="match status" value="1"/>
</dbReference>
<dbReference type="FunFam" id="1.10.287.80:FF:000005">
    <property type="entry name" value="ATP synthase gamma chain"/>
    <property type="match status" value="2"/>
</dbReference>
<dbReference type="FunFam" id="3.40.1380.10:FF:000001">
    <property type="entry name" value="ATP synthase gamma chain"/>
    <property type="match status" value="1"/>
</dbReference>
<dbReference type="Gene3D" id="3.40.1380.10">
    <property type="match status" value="1"/>
</dbReference>
<dbReference type="Gene3D" id="1.10.287.80">
    <property type="entry name" value="ATP synthase, gamma subunit, helix hairpin domain"/>
    <property type="match status" value="1"/>
</dbReference>
<dbReference type="HAMAP" id="MF_00815">
    <property type="entry name" value="ATP_synth_gamma_bact"/>
    <property type="match status" value="1"/>
</dbReference>
<dbReference type="InterPro" id="IPR035968">
    <property type="entry name" value="ATP_synth_F1_ATPase_gsu"/>
</dbReference>
<dbReference type="InterPro" id="IPR000131">
    <property type="entry name" value="ATP_synth_F1_gsu"/>
</dbReference>
<dbReference type="InterPro" id="IPR023632">
    <property type="entry name" value="ATP_synth_F1_gsu_CS"/>
</dbReference>
<dbReference type="NCBIfam" id="TIGR01146">
    <property type="entry name" value="ATPsyn_F1gamma"/>
    <property type="match status" value="1"/>
</dbReference>
<dbReference type="NCBIfam" id="NF004144">
    <property type="entry name" value="PRK05621.1-1"/>
    <property type="match status" value="1"/>
</dbReference>
<dbReference type="PANTHER" id="PTHR11693">
    <property type="entry name" value="ATP SYNTHASE GAMMA CHAIN"/>
    <property type="match status" value="1"/>
</dbReference>
<dbReference type="PANTHER" id="PTHR11693:SF22">
    <property type="entry name" value="ATP SYNTHASE SUBUNIT GAMMA, MITOCHONDRIAL"/>
    <property type="match status" value="1"/>
</dbReference>
<dbReference type="Pfam" id="PF00231">
    <property type="entry name" value="ATP-synt"/>
    <property type="match status" value="1"/>
</dbReference>
<dbReference type="PRINTS" id="PR00126">
    <property type="entry name" value="ATPASEGAMMA"/>
</dbReference>
<dbReference type="SUPFAM" id="SSF52943">
    <property type="entry name" value="ATP synthase (F1-ATPase), gamma subunit"/>
    <property type="match status" value="1"/>
</dbReference>
<dbReference type="PROSITE" id="PS00153">
    <property type="entry name" value="ATPASE_GAMMA"/>
    <property type="match status" value="1"/>
</dbReference>
<organism>
    <name type="scientific">Salmonella enteritidis PT4 (strain P125109)</name>
    <dbReference type="NCBI Taxonomy" id="550537"/>
    <lineage>
        <taxon>Bacteria</taxon>
        <taxon>Pseudomonadati</taxon>
        <taxon>Pseudomonadota</taxon>
        <taxon>Gammaproteobacteria</taxon>
        <taxon>Enterobacterales</taxon>
        <taxon>Enterobacteriaceae</taxon>
        <taxon>Salmonella</taxon>
    </lineage>
</organism>
<keyword id="KW-0066">ATP synthesis</keyword>
<keyword id="KW-0997">Cell inner membrane</keyword>
<keyword id="KW-1003">Cell membrane</keyword>
<keyword id="KW-0139">CF(1)</keyword>
<keyword id="KW-0375">Hydrogen ion transport</keyword>
<keyword id="KW-0406">Ion transport</keyword>
<keyword id="KW-0472">Membrane</keyword>
<keyword id="KW-0813">Transport</keyword>
<sequence length="287" mass="31555">MAGAKEIRSKIASVQNTQKITKAMEMVAASKMRKSQDRMAASRPYAETMRKVIGHLANGNLEYKHPYLEERDVKRVGYLVVSTDRGLCGGLNINLFKKLLADMKAWSDKGVQCELAMIGSKGVSFFNSVGGNVVAQVTGMGDNPSLSELIGPVKVMLQAYDEGRLDKLYIVSNKFINTMSQVPTITQLLPLPASEDDDLKRKAWDYLYEPDPKALLDTLLRRYVESQVYQGVVENLASEQAARMVAMKAATDNGGSLIKELQLVYNKARQASITQELTEIVSGAAAV</sequence>
<gene>
    <name evidence="1" type="primary">atpG</name>
    <name type="ordered locus">SEN3680</name>
</gene>
<feature type="chain" id="PRO_1000134200" description="ATP synthase gamma chain">
    <location>
        <begin position="1"/>
        <end position="287"/>
    </location>
</feature>
<evidence type="ECO:0000255" key="1">
    <source>
        <dbReference type="HAMAP-Rule" id="MF_00815"/>
    </source>
</evidence>
<reference key="1">
    <citation type="journal article" date="2008" name="Genome Res.">
        <title>Comparative genome analysis of Salmonella enteritidis PT4 and Salmonella gallinarum 287/91 provides insights into evolutionary and host adaptation pathways.</title>
        <authorList>
            <person name="Thomson N.R."/>
            <person name="Clayton D.J."/>
            <person name="Windhorst D."/>
            <person name="Vernikos G."/>
            <person name="Davidson S."/>
            <person name="Churcher C."/>
            <person name="Quail M.A."/>
            <person name="Stevens M."/>
            <person name="Jones M.A."/>
            <person name="Watson M."/>
            <person name="Barron A."/>
            <person name="Layton A."/>
            <person name="Pickard D."/>
            <person name="Kingsley R.A."/>
            <person name="Bignell A."/>
            <person name="Clark L."/>
            <person name="Harris B."/>
            <person name="Ormond D."/>
            <person name="Abdellah Z."/>
            <person name="Brooks K."/>
            <person name="Cherevach I."/>
            <person name="Chillingworth T."/>
            <person name="Woodward J."/>
            <person name="Norberczak H."/>
            <person name="Lord A."/>
            <person name="Arrowsmith C."/>
            <person name="Jagels K."/>
            <person name="Moule S."/>
            <person name="Mungall K."/>
            <person name="Saunders M."/>
            <person name="Whitehead S."/>
            <person name="Chabalgoity J.A."/>
            <person name="Maskell D."/>
            <person name="Humphreys T."/>
            <person name="Roberts M."/>
            <person name="Barrow P.A."/>
            <person name="Dougan G."/>
            <person name="Parkhill J."/>
        </authorList>
    </citation>
    <scope>NUCLEOTIDE SEQUENCE [LARGE SCALE GENOMIC DNA]</scope>
    <source>
        <strain>P125109</strain>
    </source>
</reference>